<sequence length="203" mass="22224">MIKGYEEEEWIPKTRLGRLVYEGQVTTFEEAVRSGLPIKEHQIIDLLLPGLEDEVLDITMVQRMTDSGRRVKFRTTVIVGNRDGYIGIGHGKDVQVGGAIKKGIENAKLNVVRINRGCGSWECGCGQAHTVPYKVSGSSGSVRIYLMPAPRGLGLAAGDVAKKVMEMAGIKDVWTRTEGSTRTTLNFAKATYNALLNTITVRS</sequence>
<protein>
    <recommendedName>
        <fullName evidence="1">Small ribosomal subunit protein uS5</fullName>
    </recommendedName>
    <alternativeName>
        <fullName evidence="2">30S ribosomal protein S5</fullName>
    </alternativeName>
</protein>
<keyword id="KW-1185">Reference proteome</keyword>
<keyword id="KW-0687">Ribonucleoprotein</keyword>
<keyword id="KW-0689">Ribosomal protein</keyword>
<keyword id="KW-0694">RNA-binding</keyword>
<keyword id="KW-0699">rRNA-binding</keyword>
<dbReference type="EMBL" id="CP000477">
    <property type="protein sequence ID" value="ABK15474.1"/>
    <property type="molecule type" value="Genomic_DNA"/>
</dbReference>
<dbReference type="RefSeq" id="WP_011696852.1">
    <property type="nucleotide sequence ID" value="NC_008553.1"/>
</dbReference>
<dbReference type="SMR" id="A0B9V0"/>
<dbReference type="STRING" id="349307.Mthe_1708"/>
<dbReference type="GeneID" id="4462668"/>
<dbReference type="KEGG" id="mtp:Mthe_1708"/>
<dbReference type="HOGENOM" id="CLU_065898_0_1_2"/>
<dbReference type="OrthoDB" id="38155at2157"/>
<dbReference type="Proteomes" id="UP000000674">
    <property type="component" value="Chromosome"/>
</dbReference>
<dbReference type="GO" id="GO:0022627">
    <property type="term" value="C:cytosolic small ribosomal subunit"/>
    <property type="evidence" value="ECO:0007669"/>
    <property type="project" value="TreeGrafter"/>
</dbReference>
<dbReference type="GO" id="GO:0019843">
    <property type="term" value="F:rRNA binding"/>
    <property type="evidence" value="ECO:0007669"/>
    <property type="project" value="UniProtKB-UniRule"/>
</dbReference>
<dbReference type="GO" id="GO:0003735">
    <property type="term" value="F:structural constituent of ribosome"/>
    <property type="evidence" value="ECO:0007669"/>
    <property type="project" value="InterPro"/>
</dbReference>
<dbReference type="GO" id="GO:0006412">
    <property type="term" value="P:translation"/>
    <property type="evidence" value="ECO:0007669"/>
    <property type="project" value="UniProtKB-UniRule"/>
</dbReference>
<dbReference type="FunFam" id="3.30.160.20:FF:000002">
    <property type="entry name" value="40S ribosomal protein S2"/>
    <property type="match status" value="1"/>
</dbReference>
<dbReference type="FunFam" id="3.30.230.10:FF:000004">
    <property type="entry name" value="40S ribosomal protein S2"/>
    <property type="match status" value="1"/>
</dbReference>
<dbReference type="Gene3D" id="3.30.160.20">
    <property type="match status" value="1"/>
</dbReference>
<dbReference type="Gene3D" id="3.30.230.10">
    <property type="match status" value="1"/>
</dbReference>
<dbReference type="HAMAP" id="MF_01307_A">
    <property type="entry name" value="Ribosomal_uS5_A"/>
    <property type="match status" value="1"/>
</dbReference>
<dbReference type="InterPro" id="IPR020568">
    <property type="entry name" value="Ribosomal_Su5_D2-typ_SF"/>
</dbReference>
<dbReference type="InterPro" id="IPR000851">
    <property type="entry name" value="Ribosomal_uS5"/>
</dbReference>
<dbReference type="InterPro" id="IPR047866">
    <property type="entry name" value="Ribosomal_uS5_arc"/>
</dbReference>
<dbReference type="InterPro" id="IPR005324">
    <property type="entry name" value="Ribosomal_uS5_C"/>
</dbReference>
<dbReference type="InterPro" id="IPR005711">
    <property type="entry name" value="Ribosomal_uS5_euk/arc"/>
</dbReference>
<dbReference type="InterPro" id="IPR013810">
    <property type="entry name" value="Ribosomal_uS5_N"/>
</dbReference>
<dbReference type="InterPro" id="IPR018192">
    <property type="entry name" value="Ribosomal_uS5_N_CS"/>
</dbReference>
<dbReference type="InterPro" id="IPR014721">
    <property type="entry name" value="Ribsml_uS5_D2-typ_fold_subgr"/>
</dbReference>
<dbReference type="NCBIfam" id="NF003125">
    <property type="entry name" value="PRK04044.1"/>
    <property type="match status" value="1"/>
</dbReference>
<dbReference type="NCBIfam" id="TIGR01020">
    <property type="entry name" value="uS5_euk_arch"/>
    <property type="match status" value="1"/>
</dbReference>
<dbReference type="PANTHER" id="PTHR13718:SF4">
    <property type="entry name" value="40S RIBOSOMAL PROTEIN S2"/>
    <property type="match status" value="1"/>
</dbReference>
<dbReference type="PANTHER" id="PTHR13718">
    <property type="entry name" value="RIBOSOMAL S SUBUNIT"/>
    <property type="match status" value="1"/>
</dbReference>
<dbReference type="Pfam" id="PF00333">
    <property type="entry name" value="Ribosomal_S5"/>
    <property type="match status" value="1"/>
</dbReference>
<dbReference type="Pfam" id="PF03719">
    <property type="entry name" value="Ribosomal_S5_C"/>
    <property type="match status" value="1"/>
</dbReference>
<dbReference type="SUPFAM" id="SSF54768">
    <property type="entry name" value="dsRNA-binding domain-like"/>
    <property type="match status" value="1"/>
</dbReference>
<dbReference type="SUPFAM" id="SSF54211">
    <property type="entry name" value="Ribosomal protein S5 domain 2-like"/>
    <property type="match status" value="1"/>
</dbReference>
<dbReference type="PROSITE" id="PS00585">
    <property type="entry name" value="RIBOSOMAL_S5"/>
    <property type="match status" value="1"/>
</dbReference>
<dbReference type="PROSITE" id="PS50881">
    <property type="entry name" value="S5_DSRBD"/>
    <property type="match status" value="1"/>
</dbReference>
<proteinExistence type="inferred from homology"/>
<evidence type="ECO:0000255" key="1">
    <source>
        <dbReference type="HAMAP-Rule" id="MF_01307"/>
    </source>
</evidence>
<evidence type="ECO:0000305" key="2"/>
<name>RS5_METTP</name>
<reference key="1">
    <citation type="submission" date="2006-10" db="EMBL/GenBank/DDBJ databases">
        <title>Complete sequence of Methanosaeta thermophila PT.</title>
        <authorList>
            <consortium name="US DOE Joint Genome Institute"/>
            <person name="Copeland A."/>
            <person name="Lucas S."/>
            <person name="Lapidus A."/>
            <person name="Barry K."/>
            <person name="Detter J.C."/>
            <person name="Glavina del Rio T."/>
            <person name="Hammon N."/>
            <person name="Israni S."/>
            <person name="Pitluck S."/>
            <person name="Chain P."/>
            <person name="Malfatti S."/>
            <person name="Shin M."/>
            <person name="Vergez L."/>
            <person name="Schmutz J."/>
            <person name="Larimer F."/>
            <person name="Land M."/>
            <person name="Hauser L."/>
            <person name="Kyrpides N."/>
            <person name="Kim E."/>
            <person name="Smith K.S."/>
            <person name="Ingram-Smith C."/>
            <person name="Richardson P."/>
        </authorList>
    </citation>
    <scope>NUCLEOTIDE SEQUENCE [LARGE SCALE GENOMIC DNA]</scope>
    <source>
        <strain>DSM 6194 / JCM 14653 / NBRC 101360 / PT</strain>
    </source>
</reference>
<accession>A0B9V0</accession>
<organism>
    <name type="scientific">Methanothrix thermoacetophila (strain DSM 6194 / JCM 14653 / NBRC 101360 / PT)</name>
    <name type="common">Methanosaeta thermophila</name>
    <dbReference type="NCBI Taxonomy" id="349307"/>
    <lineage>
        <taxon>Archaea</taxon>
        <taxon>Methanobacteriati</taxon>
        <taxon>Methanobacteriota</taxon>
        <taxon>Stenosarchaea group</taxon>
        <taxon>Methanomicrobia</taxon>
        <taxon>Methanotrichales</taxon>
        <taxon>Methanotrichaceae</taxon>
        <taxon>Methanothrix</taxon>
    </lineage>
</organism>
<feature type="chain" id="PRO_0000293211" description="Small ribosomal subunit protein uS5">
    <location>
        <begin position="1"/>
        <end position="203"/>
    </location>
</feature>
<feature type="domain" description="S5 DRBM" evidence="1">
    <location>
        <begin position="51"/>
        <end position="114"/>
    </location>
</feature>
<comment type="function">
    <text evidence="1">With S4 and S12 plays an important role in translational accuracy.</text>
</comment>
<comment type="subunit">
    <text evidence="1">Part of the 30S ribosomal subunit. Contacts protein S4.</text>
</comment>
<comment type="domain">
    <text>The N-terminal domain interacts with the head of the 30S subunit; the C-terminal domain interacts with the body and contacts protein S4. The interaction surface between S4 and S5 is involved in control of translational fidelity.</text>
</comment>
<comment type="similarity">
    <text evidence="1">Belongs to the universal ribosomal protein uS5 family.</text>
</comment>
<gene>
    <name evidence="1" type="primary">rps5</name>
    <name type="ordered locus">Mthe_1708</name>
</gene>